<reference key="1">
    <citation type="submission" date="2007-11" db="EMBL/GenBank/DDBJ databases">
        <title>Complete sequence of Delftia acidovorans DSM 14801 / SPH-1.</title>
        <authorList>
            <person name="Copeland A."/>
            <person name="Lucas S."/>
            <person name="Lapidus A."/>
            <person name="Barry K."/>
            <person name="Glavina del Rio T."/>
            <person name="Dalin E."/>
            <person name="Tice H."/>
            <person name="Pitluck S."/>
            <person name="Lowry S."/>
            <person name="Clum A."/>
            <person name="Schmutz J."/>
            <person name="Larimer F."/>
            <person name="Land M."/>
            <person name="Hauser L."/>
            <person name="Kyrpides N."/>
            <person name="Kim E."/>
            <person name="Schleheck D."/>
            <person name="Richardson P."/>
        </authorList>
    </citation>
    <scope>NUCLEOTIDE SEQUENCE [LARGE SCALE GENOMIC DNA]</scope>
    <source>
        <strain>DSM 14801 / SPH-1</strain>
    </source>
</reference>
<name>SAHH_DELAS</name>
<dbReference type="EC" id="3.13.2.1" evidence="1"/>
<dbReference type="EMBL" id="CP000884">
    <property type="protein sequence ID" value="ABX38547.1"/>
    <property type="molecule type" value="Genomic_DNA"/>
</dbReference>
<dbReference type="RefSeq" id="WP_012207716.1">
    <property type="nucleotide sequence ID" value="NC_010002.1"/>
</dbReference>
<dbReference type="SMR" id="A9C184"/>
<dbReference type="STRING" id="398578.Daci_5919"/>
<dbReference type="GeneID" id="24117215"/>
<dbReference type="KEGG" id="dac:Daci_5919"/>
<dbReference type="eggNOG" id="COG0499">
    <property type="taxonomic scope" value="Bacteria"/>
</dbReference>
<dbReference type="HOGENOM" id="CLU_025194_2_0_4"/>
<dbReference type="UniPathway" id="UPA00314">
    <property type="reaction ID" value="UER00076"/>
</dbReference>
<dbReference type="Proteomes" id="UP000000784">
    <property type="component" value="Chromosome"/>
</dbReference>
<dbReference type="GO" id="GO:0005829">
    <property type="term" value="C:cytosol"/>
    <property type="evidence" value="ECO:0007669"/>
    <property type="project" value="TreeGrafter"/>
</dbReference>
<dbReference type="GO" id="GO:0004013">
    <property type="term" value="F:adenosylhomocysteinase activity"/>
    <property type="evidence" value="ECO:0007669"/>
    <property type="project" value="UniProtKB-UniRule"/>
</dbReference>
<dbReference type="GO" id="GO:0071269">
    <property type="term" value="P:L-homocysteine biosynthetic process"/>
    <property type="evidence" value="ECO:0007669"/>
    <property type="project" value="UniProtKB-UniRule"/>
</dbReference>
<dbReference type="GO" id="GO:0006730">
    <property type="term" value="P:one-carbon metabolic process"/>
    <property type="evidence" value="ECO:0007669"/>
    <property type="project" value="UniProtKB-KW"/>
</dbReference>
<dbReference type="GO" id="GO:0033353">
    <property type="term" value="P:S-adenosylmethionine cycle"/>
    <property type="evidence" value="ECO:0007669"/>
    <property type="project" value="TreeGrafter"/>
</dbReference>
<dbReference type="CDD" id="cd00401">
    <property type="entry name" value="SAHH"/>
    <property type="match status" value="1"/>
</dbReference>
<dbReference type="FunFam" id="3.40.50.720:FF:000004">
    <property type="entry name" value="Adenosylhomocysteinase"/>
    <property type="match status" value="1"/>
</dbReference>
<dbReference type="Gene3D" id="3.40.50.1480">
    <property type="entry name" value="Adenosylhomocysteinase-like"/>
    <property type="match status" value="1"/>
</dbReference>
<dbReference type="Gene3D" id="3.40.50.720">
    <property type="entry name" value="NAD(P)-binding Rossmann-like Domain"/>
    <property type="match status" value="1"/>
</dbReference>
<dbReference type="HAMAP" id="MF_00563">
    <property type="entry name" value="AdoHcyase"/>
    <property type="match status" value="1"/>
</dbReference>
<dbReference type="InterPro" id="IPR042172">
    <property type="entry name" value="Adenosylhomocyst_ase-like_sf"/>
</dbReference>
<dbReference type="InterPro" id="IPR000043">
    <property type="entry name" value="Adenosylhomocysteinase-like"/>
</dbReference>
<dbReference type="InterPro" id="IPR015878">
    <property type="entry name" value="Ado_hCys_hydrolase_NAD-bd"/>
</dbReference>
<dbReference type="InterPro" id="IPR036291">
    <property type="entry name" value="NAD(P)-bd_dom_sf"/>
</dbReference>
<dbReference type="InterPro" id="IPR020082">
    <property type="entry name" value="S-Ado-L-homoCys_hydrolase_CS"/>
</dbReference>
<dbReference type="NCBIfam" id="TIGR00936">
    <property type="entry name" value="ahcY"/>
    <property type="match status" value="1"/>
</dbReference>
<dbReference type="NCBIfam" id="NF004005">
    <property type="entry name" value="PRK05476.2-3"/>
    <property type="match status" value="1"/>
</dbReference>
<dbReference type="PANTHER" id="PTHR23420">
    <property type="entry name" value="ADENOSYLHOMOCYSTEINASE"/>
    <property type="match status" value="1"/>
</dbReference>
<dbReference type="PANTHER" id="PTHR23420:SF0">
    <property type="entry name" value="ADENOSYLHOMOCYSTEINASE"/>
    <property type="match status" value="1"/>
</dbReference>
<dbReference type="Pfam" id="PF05221">
    <property type="entry name" value="AdoHcyase"/>
    <property type="match status" value="1"/>
</dbReference>
<dbReference type="Pfam" id="PF00670">
    <property type="entry name" value="AdoHcyase_NAD"/>
    <property type="match status" value="1"/>
</dbReference>
<dbReference type="PIRSF" id="PIRSF001109">
    <property type="entry name" value="Ad_hcy_hydrolase"/>
    <property type="match status" value="1"/>
</dbReference>
<dbReference type="SMART" id="SM00996">
    <property type="entry name" value="AdoHcyase"/>
    <property type="match status" value="1"/>
</dbReference>
<dbReference type="SMART" id="SM00997">
    <property type="entry name" value="AdoHcyase_NAD"/>
    <property type="match status" value="1"/>
</dbReference>
<dbReference type="SUPFAM" id="SSF52283">
    <property type="entry name" value="Formate/glycerate dehydrogenase catalytic domain-like"/>
    <property type="match status" value="1"/>
</dbReference>
<dbReference type="SUPFAM" id="SSF51735">
    <property type="entry name" value="NAD(P)-binding Rossmann-fold domains"/>
    <property type="match status" value="1"/>
</dbReference>
<dbReference type="PROSITE" id="PS00738">
    <property type="entry name" value="ADOHCYASE_1"/>
    <property type="match status" value="1"/>
</dbReference>
<dbReference type="PROSITE" id="PS00739">
    <property type="entry name" value="ADOHCYASE_2"/>
    <property type="match status" value="1"/>
</dbReference>
<organism>
    <name type="scientific">Delftia acidovorans (strain DSM 14801 / SPH-1)</name>
    <dbReference type="NCBI Taxonomy" id="398578"/>
    <lineage>
        <taxon>Bacteria</taxon>
        <taxon>Pseudomonadati</taxon>
        <taxon>Pseudomonadota</taxon>
        <taxon>Betaproteobacteria</taxon>
        <taxon>Burkholderiales</taxon>
        <taxon>Comamonadaceae</taxon>
        <taxon>Delftia</taxon>
    </lineage>
</organism>
<feature type="chain" id="PRO_1000129282" description="Adenosylhomocysteinase">
    <location>
        <begin position="1"/>
        <end position="476"/>
    </location>
</feature>
<feature type="binding site" evidence="1">
    <location>
        <position position="62"/>
    </location>
    <ligand>
        <name>substrate</name>
    </ligand>
</feature>
<feature type="binding site" evidence="1">
    <location>
        <position position="141"/>
    </location>
    <ligand>
        <name>substrate</name>
    </ligand>
</feature>
<feature type="binding site" evidence="1">
    <location>
        <position position="201"/>
    </location>
    <ligand>
        <name>substrate</name>
    </ligand>
</feature>
<feature type="binding site" evidence="1">
    <location>
        <begin position="202"/>
        <end position="204"/>
    </location>
    <ligand>
        <name>NAD(+)</name>
        <dbReference type="ChEBI" id="CHEBI:57540"/>
    </ligand>
</feature>
<feature type="binding site" evidence="1">
    <location>
        <position position="231"/>
    </location>
    <ligand>
        <name>substrate</name>
    </ligand>
</feature>
<feature type="binding site" evidence="1">
    <location>
        <position position="235"/>
    </location>
    <ligand>
        <name>substrate</name>
    </ligand>
</feature>
<feature type="binding site" evidence="1">
    <location>
        <position position="236"/>
    </location>
    <ligand>
        <name>NAD(+)</name>
        <dbReference type="ChEBI" id="CHEBI:57540"/>
    </ligand>
</feature>
<feature type="binding site" evidence="1">
    <location>
        <begin position="265"/>
        <end position="270"/>
    </location>
    <ligand>
        <name>NAD(+)</name>
        <dbReference type="ChEBI" id="CHEBI:57540"/>
    </ligand>
</feature>
<feature type="binding site" evidence="1">
    <location>
        <position position="288"/>
    </location>
    <ligand>
        <name>NAD(+)</name>
        <dbReference type="ChEBI" id="CHEBI:57540"/>
    </ligand>
</feature>
<feature type="binding site" evidence="1">
    <location>
        <position position="323"/>
    </location>
    <ligand>
        <name>NAD(+)</name>
        <dbReference type="ChEBI" id="CHEBI:57540"/>
    </ligand>
</feature>
<feature type="binding site" evidence="1">
    <location>
        <begin position="344"/>
        <end position="346"/>
    </location>
    <ligand>
        <name>NAD(+)</name>
        <dbReference type="ChEBI" id="CHEBI:57540"/>
    </ligand>
</feature>
<feature type="binding site" evidence="1">
    <location>
        <position position="389"/>
    </location>
    <ligand>
        <name>NAD(+)</name>
        <dbReference type="ChEBI" id="CHEBI:57540"/>
    </ligand>
</feature>
<keyword id="KW-0963">Cytoplasm</keyword>
<keyword id="KW-0378">Hydrolase</keyword>
<keyword id="KW-0520">NAD</keyword>
<keyword id="KW-0554">One-carbon metabolism</keyword>
<keyword id="KW-1185">Reference proteome</keyword>
<accession>A9C184</accession>
<evidence type="ECO:0000255" key="1">
    <source>
        <dbReference type="HAMAP-Rule" id="MF_00563"/>
    </source>
</evidence>
<comment type="function">
    <text evidence="1">May play a key role in the regulation of the intracellular concentration of adenosylhomocysteine.</text>
</comment>
<comment type="catalytic activity">
    <reaction evidence="1">
        <text>S-adenosyl-L-homocysteine + H2O = L-homocysteine + adenosine</text>
        <dbReference type="Rhea" id="RHEA:21708"/>
        <dbReference type="ChEBI" id="CHEBI:15377"/>
        <dbReference type="ChEBI" id="CHEBI:16335"/>
        <dbReference type="ChEBI" id="CHEBI:57856"/>
        <dbReference type="ChEBI" id="CHEBI:58199"/>
        <dbReference type="EC" id="3.13.2.1"/>
    </reaction>
</comment>
<comment type="cofactor">
    <cofactor evidence="1">
        <name>NAD(+)</name>
        <dbReference type="ChEBI" id="CHEBI:57540"/>
    </cofactor>
    <text evidence="1">Binds 1 NAD(+) per subunit.</text>
</comment>
<comment type="pathway">
    <text evidence="1">Amino-acid biosynthesis; L-homocysteine biosynthesis; L-homocysteine from S-adenosyl-L-homocysteine: step 1/1.</text>
</comment>
<comment type="subcellular location">
    <subcellularLocation>
        <location evidence="1">Cytoplasm</location>
    </subcellularLocation>
</comment>
<comment type="similarity">
    <text evidence="1">Belongs to the adenosylhomocysteinase family.</text>
</comment>
<proteinExistence type="inferred from homology"/>
<protein>
    <recommendedName>
        <fullName evidence="1">Adenosylhomocysteinase</fullName>
        <ecNumber evidence="1">3.13.2.1</ecNumber>
    </recommendedName>
    <alternativeName>
        <fullName evidence="1">S-adenosyl-L-homocysteine hydrolase</fullName>
        <shortName evidence="1">AdoHcyase</shortName>
    </alternativeName>
</protein>
<gene>
    <name evidence="1" type="primary">ahcY</name>
    <name type="ordered locus">Daci_5919</name>
</gene>
<sequence>MNAAVRPVSADTAIADISLAAWGRKEILIAETEMPGLMATREEFAAAQPLKGARIAGSLHMTIQTAVLIETLKALGAEVRWASCNIFSTQDHAAAAIAETGTPVFAIKGESLADYWDYTHRIFEFGAAGTEGEGPNMILDDGGDATMLLHLGMRAEKDLSVLDNPASEEEKIAFAAIRAKLAQDPTWYTRKSAHIIGVTEETTTGVHRLNEMSAKGTLKFRAINVNDSVTKSKFDNLYGCRESLVDGIKRATDVMIAGKVAVVAGYGDVGKGCAQALRALSAQVWVTEIDPINALQAAMEGYKVVTMEWAADKADIFVTTTGNRDIIRHEHMVAMKNEAIVCNIGHFDNEIDVASIEQYQWEEIKPQVDHITFPDGKKIILLAKGRLVNLGCATGHPSFVMSASFANQTIAQIELFTKPDAYEVGKVYVLPKILDEKVARLHLKKVGAMLTELTDGQAAYIGVSKQGPYKPETYRY</sequence>